<keyword id="KW-0326">Glycosidase</keyword>
<keyword id="KW-0378">Hydrolase</keyword>
<protein>
    <recommendedName>
        <fullName evidence="1">Non-specific ribonucleoside hydrolase RihC</fullName>
        <ecNumber evidence="1">3.2.-.-</ecNumber>
    </recommendedName>
    <alternativeName>
        <fullName evidence="1">Purine/pyrimidine ribonucleoside hydrolase</fullName>
    </alternativeName>
</protein>
<proteinExistence type="inferred from homology"/>
<gene>
    <name evidence="1" type="primary">rihC</name>
    <name type="ordered locus">ECED1_0027</name>
</gene>
<reference key="1">
    <citation type="journal article" date="2009" name="PLoS Genet.">
        <title>Organised genome dynamics in the Escherichia coli species results in highly diverse adaptive paths.</title>
        <authorList>
            <person name="Touchon M."/>
            <person name="Hoede C."/>
            <person name="Tenaillon O."/>
            <person name="Barbe V."/>
            <person name="Baeriswyl S."/>
            <person name="Bidet P."/>
            <person name="Bingen E."/>
            <person name="Bonacorsi S."/>
            <person name="Bouchier C."/>
            <person name="Bouvet O."/>
            <person name="Calteau A."/>
            <person name="Chiapello H."/>
            <person name="Clermont O."/>
            <person name="Cruveiller S."/>
            <person name="Danchin A."/>
            <person name="Diard M."/>
            <person name="Dossat C."/>
            <person name="Karoui M.E."/>
            <person name="Frapy E."/>
            <person name="Garry L."/>
            <person name="Ghigo J.M."/>
            <person name="Gilles A.M."/>
            <person name="Johnson J."/>
            <person name="Le Bouguenec C."/>
            <person name="Lescat M."/>
            <person name="Mangenot S."/>
            <person name="Martinez-Jehanne V."/>
            <person name="Matic I."/>
            <person name="Nassif X."/>
            <person name="Oztas S."/>
            <person name="Petit M.A."/>
            <person name="Pichon C."/>
            <person name="Rouy Z."/>
            <person name="Ruf C.S."/>
            <person name="Schneider D."/>
            <person name="Tourret J."/>
            <person name="Vacherie B."/>
            <person name="Vallenet D."/>
            <person name="Medigue C."/>
            <person name="Rocha E.P.C."/>
            <person name="Denamur E."/>
        </authorList>
    </citation>
    <scope>NUCLEOTIDE SEQUENCE [LARGE SCALE GENOMIC DNA]</scope>
    <source>
        <strain>ED1a</strain>
    </source>
</reference>
<dbReference type="EC" id="3.2.-.-" evidence="1"/>
<dbReference type="EMBL" id="CU928162">
    <property type="protein sequence ID" value="CAR06250.1"/>
    <property type="molecule type" value="Genomic_DNA"/>
</dbReference>
<dbReference type="RefSeq" id="WP_001239167.1">
    <property type="nucleotide sequence ID" value="NC_011745.1"/>
</dbReference>
<dbReference type="SMR" id="B7MNN5"/>
<dbReference type="KEGG" id="ecq:ECED1_0027"/>
<dbReference type="HOGENOM" id="CLU_036838_2_2_6"/>
<dbReference type="Proteomes" id="UP000000748">
    <property type="component" value="Chromosome"/>
</dbReference>
<dbReference type="GO" id="GO:0005829">
    <property type="term" value="C:cytosol"/>
    <property type="evidence" value="ECO:0007669"/>
    <property type="project" value="TreeGrafter"/>
</dbReference>
<dbReference type="GO" id="GO:0008477">
    <property type="term" value="F:purine nucleosidase activity"/>
    <property type="evidence" value="ECO:0007669"/>
    <property type="project" value="TreeGrafter"/>
</dbReference>
<dbReference type="GO" id="GO:0045437">
    <property type="term" value="F:uridine nucleosidase activity"/>
    <property type="evidence" value="ECO:0007669"/>
    <property type="project" value="UniProtKB-ARBA"/>
</dbReference>
<dbReference type="GO" id="GO:0006144">
    <property type="term" value="P:purine nucleobase metabolic process"/>
    <property type="evidence" value="ECO:0007669"/>
    <property type="project" value="UniProtKB-UniRule"/>
</dbReference>
<dbReference type="GO" id="GO:0006152">
    <property type="term" value="P:purine nucleoside catabolic process"/>
    <property type="evidence" value="ECO:0007669"/>
    <property type="project" value="TreeGrafter"/>
</dbReference>
<dbReference type="GO" id="GO:0006206">
    <property type="term" value="P:pyrimidine nucleobase metabolic process"/>
    <property type="evidence" value="ECO:0007669"/>
    <property type="project" value="UniProtKB-UniRule"/>
</dbReference>
<dbReference type="CDD" id="cd02651">
    <property type="entry name" value="nuc_hydro_IU_UC_XIUA"/>
    <property type="match status" value="1"/>
</dbReference>
<dbReference type="FunFam" id="3.90.245.10:FF:000002">
    <property type="entry name" value="Non-specific ribonucleoside hydrolase RihC"/>
    <property type="match status" value="1"/>
</dbReference>
<dbReference type="Gene3D" id="3.90.245.10">
    <property type="entry name" value="Ribonucleoside hydrolase-like"/>
    <property type="match status" value="1"/>
</dbReference>
<dbReference type="HAMAP" id="MF_01432">
    <property type="entry name" value="Nucleosid_hydro_RihC"/>
    <property type="match status" value="1"/>
</dbReference>
<dbReference type="InterPro" id="IPR015910">
    <property type="entry name" value="I/U_nuclsd_hydro_CS"/>
</dbReference>
<dbReference type="InterPro" id="IPR001910">
    <property type="entry name" value="Inosine/uridine_hydrolase_dom"/>
</dbReference>
<dbReference type="InterPro" id="IPR023186">
    <property type="entry name" value="IUNH"/>
</dbReference>
<dbReference type="InterPro" id="IPR022976">
    <property type="entry name" value="Nucleosid_hydro_RihC_nonspecif"/>
</dbReference>
<dbReference type="InterPro" id="IPR036452">
    <property type="entry name" value="Ribo_hydro-like"/>
</dbReference>
<dbReference type="NCBIfam" id="NF008036">
    <property type="entry name" value="PRK10768.1"/>
    <property type="match status" value="1"/>
</dbReference>
<dbReference type="PANTHER" id="PTHR12304">
    <property type="entry name" value="INOSINE-URIDINE PREFERRING NUCLEOSIDE HYDROLASE"/>
    <property type="match status" value="1"/>
</dbReference>
<dbReference type="PANTHER" id="PTHR12304:SF15">
    <property type="entry name" value="NON-SPECIFIC RIBONUCLEOSIDE HYDROLASE RIHC"/>
    <property type="match status" value="1"/>
</dbReference>
<dbReference type="Pfam" id="PF01156">
    <property type="entry name" value="IU_nuc_hydro"/>
    <property type="match status" value="1"/>
</dbReference>
<dbReference type="SUPFAM" id="SSF53590">
    <property type="entry name" value="Nucleoside hydrolase"/>
    <property type="match status" value="1"/>
</dbReference>
<dbReference type="PROSITE" id="PS01247">
    <property type="entry name" value="IUNH"/>
    <property type="match status" value="1"/>
</dbReference>
<organism>
    <name type="scientific">Escherichia coli O81 (strain ED1a)</name>
    <dbReference type="NCBI Taxonomy" id="585397"/>
    <lineage>
        <taxon>Bacteria</taxon>
        <taxon>Pseudomonadati</taxon>
        <taxon>Pseudomonadota</taxon>
        <taxon>Gammaproteobacteria</taxon>
        <taxon>Enterobacterales</taxon>
        <taxon>Enterobacteriaceae</taxon>
        <taxon>Escherichia</taxon>
    </lineage>
</organism>
<evidence type="ECO:0000255" key="1">
    <source>
        <dbReference type="HAMAP-Rule" id="MF_01432"/>
    </source>
</evidence>
<comment type="function">
    <text evidence="1">Hydrolyzes both purine and pyrimidine ribonucleosides with a broad-substrate specificity.</text>
</comment>
<comment type="similarity">
    <text evidence="1">Belongs to the IUNH family. RihC subfamily.</text>
</comment>
<accession>B7MNN5</accession>
<feature type="chain" id="PRO_1000184898" description="Non-specific ribonucleoside hydrolase RihC">
    <location>
        <begin position="1"/>
        <end position="304"/>
    </location>
</feature>
<feature type="active site" evidence="1">
    <location>
        <position position="233"/>
    </location>
</feature>
<name>RIHC_ECO81</name>
<sequence>MRLPIFLDTDPGIDDAVAIAAAIFAPELDLQLMTTVAGNVSVEKTTRNALQLLHFWNVDIPLAQGAAVPLVRAPRDAASVHGESGMAGYDFVEHNRQPLGIPAFLAIRDALMRAPEPVTLVAIGPLTNIALLLSQCPECKPYIRRLVIMGGSAGRGNCTPNAEFNIAADPEAAACVFRSGIEIVMCGLDVTNQAILTPDYLATLPELNRTGKMLHALFSHYRSGSMQSGLRMHDLCAIAWLVRPELFTLKPCFVAVETQGEFTSGTTVVDIDGCLGKPANVQVALDLDVKGFQQWVAEVLALAL</sequence>